<reference key="1">
    <citation type="journal article" date="2009" name="J. Bacteriol.">
        <title>Genomic sequencing reveals regulatory mutations and recombinational events in the widely used MC4100 lineage of Escherichia coli K-12.</title>
        <authorList>
            <person name="Ferenci T."/>
            <person name="Zhou Z."/>
            <person name="Betteridge T."/>
            <person name="Ren Y."/>
            <person name="Liu Y."/>
            <person name="Feng L."/>
            <person name="Reeves P.R."/>
            <person name="Wang L."/>
        </authorList>
    </citation>
    <scope>NUCLEOTIDE SEQUENCE [LARGE SCALE GENOMIC DNA]</scope>
    <source>
        <strain>K12 / MC4100 / BW2952</strain>
    </source>
</reference>
<protein>
    <recommendedName>
        <fullName evidence="1">Small ribosomal subunit protein bS18</fullName>
    </recommendedName>
    <alternativeName>
        <fullName evidence="2">30S ribosomal protein S18</fullName>
    </alternativeName>
</protein>
<accession>C4ZR79</accession>
<comment type="function">
    <text evidence="1">Binds as a heterodimer with protein bS6 to the central domain of the 16S rRNA, where it helps stabilize the platform of the 30S subunit.</text>
</comment>
<comment type="subunit">
    <text evidence="1">Part of the 30S ribosomal subunit. Forms a tight heterodimer with protein bS6.</text>
</comment>
<comment type="similarity">
    <text evidence="1">Belongs to the bacterial ribosomal protein bS18 family.</text>
</comment>
<proteinExistence type="inferred from homology"/>
<name>RS18_ECOBW</name>
<dbReference type="EMBL" id="CP001396">
    <property type="protein sequence ID" value="ACR61790.1"/>
    <property type="molecule type" value="Genomic_DNA"/>
</dbReference>
<dbReference type="RefSeq" id="WP_000135199.1">
    <property type="nucleotide sequence ID" value="NC_012759.1"/>
</dbReference>
<dbReference type="SMR" id="C4ZR79"/>
<dbReference type="GeneID" id="98186237"/>
<dbReference type="KEGG" id="ebw:BWG_3914"/>
<dbReference type="HOGENOM" id="CLU_148710_2_3_6"/>
<dbReference type="GO" id="GO:0022627">
    <property type="term" value="C:cytosolic small ribosomal subunit"/>
    <property type="evidence" value="ECO:0007669"/>
    <property type="project" value="TreeGrafter"/>
</dbReference>
<dbReference type="GO" id="GO:0070181">
    <property type="term" value="F:small ribosomal subunit rRNA binding"/>
    <property type="evidence" value="ECO:0007669"/>
    <property type="project" value="TreeGrafter"/>
</dbReference>
<dbReference type="GO" id="GO:0003735">
    <property type="term" value="F:structural constituent of ribosome"/>
    <property type="evidence" value="ECO:0007669"/>
    <property type="project" value="InterPro"/>
</dbReference>
<dbReference type="GO" id="GO:0006412">
    <property type="term" value="P:translation"/>
    <property type="evidence" value="ECO:0007669"/>
    <property type="project" value="UniProtKB-UniRule"/>
</dbReference>
<dbReference type="FunFam" id="4.10.640.10:FF:000001">
    <property type="entry name" value="30S ribosomal protein S18"/>
    <property type="match status" value="1"/>
</dbReference>
<dbReference type="Gene3D" id="4.10.640.10">
    <property type="entry name" value="Ribosomal protein S18"/>
    <property type="match status" value="1"/>
</dbReference>
<dbReference type="HAMAP" id="MF_00270">
    <property type="entry name" value="Ribosomal_bS18"/>
    <property type="match status" value="1"/>
</dbReference>
<dbReference type="InterPro" id="IPR001648">
    <property type="entry name" value="Ribosomal_bS18"/>
</dbReference>
<dbReference type="InterPro" id="IPR018275">
    <property type="entry name" value="Ribosomal_bS18_CS"/>
</dbReference>
<dbReference type="InterPro" id="IPR036870">
    <property type="entry name" value="Ribosomal_bS18_sf"/>
</dbReference>
<dbReference type="NCBIfam" id="TIGR00165">
    <property type="entry name" value="S18"/>
    <property type="match status" value="1"/>
</dbReference>
<dbReference type="PANTHER" id="PTHR13479">
    <property type="entry name" value="30S RIBOSOMAL PROTEIN S18"/>
    <property type="match status" value="1"/>
</dbReference>
<dbReference type="PANTHER" id="PTHR13479:SF40">
    <property type="entry name" value="SMALL RIBOSOMAL SUBUNIT PROTEIN BS18M"/>
    <property type="match status" value="1"/>
</dbReference>
<dbReference type="Pfam" id="PF01084">
    <property type="entry name" value="Ribosomal_S18"/>
    <property type="match status" value="1"/>
</dbReference>
<dbReference type="PRINTS" id="PR00974">
    <property type="entry name" value="RIBOSOMALS18"/>
</dbReference>
<dbReference type="SUPFAM" id="SSF46911">
    <property type="entry name" value="Ribosomal protein S18"/>
    <property type="match status" value="1"/>
</dbReference>
<dbReference type="PROSITE" id="PS00057">
    <property type="entry name" value="RIBOSOMAL_S18"/>
    <property type="match status" value="1"/>
</dbReference>
<keyword id="KW-0687">Ribonucleoprotein</keyword>
<keyword id="KW-0689">Ribosomal protein</keyword>
<keyword id="KW-0694">RNA-binding</keyword>
<keyword id="KW-0699">rRNA-binding</keyword>
<evidence type="ECO:0000255" key="1">
    <source>
        <dbReference type="HAMAP-Rule" id="MF_00270"/>
    </source>
</evidence>
<evidence type="ECO:0000305" key="2"/>
<organism>
    <name type="scientific">Escherichia coli (strain K12 / MC4100 / BW2952)</name>
    <dbReference type="NCBI Taxonomy" id="595496"/>
    <lineage>
        <taxon>Bacteria</taxon>
        <taxon>Pseudomonadati</taxon>
        <taxon>Pseudomonadota</taxon>
        <taxon>Gammaproteobacteria</taxon>
        <taxon>Enterobacterales</taxon>
        <taxon>Enterobacteriaceae</taxon>
        <taxon>Escherichia</taxon>
    </lineage>
</organism>
<feature type="chain" id="PRO_1000204726" description="Small ribosomal subunit protein bS18">
    <location>
        <begin position="1"/>
        <end position="75"/>
    </location>
</feature>
<gene>
    <name evidence="1" type="primary">rpsR</name>
    <name type="ordered locus">BWG_3914</name>
</gene>
<sequence>MARYFRRRKFCRFTAEGVQEIDYKDIATLKNYITESGKIVPSRITGTRAKYQRQLARAIKRARYLSLLPYTDRHQ</sequence>